<name>NUD18_MOUSE</name>
<feature type="chain" id="PRO_0000324568" description="8-oxo-dGDP phosphatase NUDT18">
    <location>
        <begin position="1"/>
        <end position="323"/>
    </location>
</feature>
<feature type="domain" description="Nudix hydrolase" evidence="2">
    <location>
        <begin position="37"/>
        <end position="167"/>
    </location>
</feature>
<feature type="short sequence motif" description="Nudix box">
    <location>
        <begin position="76"/>
        <end position="97"/>
    </location>
</feature>
<feature type="binding site" evidence="1">
    <location>
        <position position="58"/>
    </location>
    <ligand>
        <name>Mg(2+)</name>
        <dbReference type="ChEBI" id="CHEBI:18420"/>
    </ligand>
</feature>
<feature type="splice variant" id="VSP_032278" description="In isoform 3." evidence="4">
    <location>
        <begin position="1"/>
        <end position="173"/>
    </location>
</feature>
<feature type="splice variant" id="VSP_032279" description="In isoform 2." evidence="3">
    <location>
        <begin position="1"/>
        <end position="77"/>
    </location>
</feature>
<organism>
    <name type="scientific">Mus musculus</name>
    <name type="common">Mouse</name>
    <dbReference type="NCBI Taxonomy" id="10090"/>
    <lineage>
        <taxon>Eukaryota</taxon>
        <taxon>Metazoa</taxon>
        <taxon>Chordata</taxon>
        <taxon>Craniata</taxon>
        <taxon>Vertebrata</taxon>
        <taxon>Euteleostomi</taxon>
        <taxon>Mammalia</taxon>
        <taxon>Eutheria</taxon>
        <taxon>Euarchontoglires</taxon>
        <taxon>Glires</taxon>
        <taxon>Rodentia</taxon>
        <taxon>Myomorpha</taxon>
        <taxon>Muroidea</taxon>
        <taxon>Muridae</taxon>
        <taxon>Murinae</taxon>
        <taxon>Mus</taxon>
        <taxon>Mus</taxon>
    </lineage>
</organism>
<keyword id="KW-0025">Alternative splicing</keyword>
<keyword id="KW-0378">Hydrolase</keyword>
<keyword id="KW-0460">Magnesium</keyword>
<keyword id="KW-0464">Manganese</keyword>
<keyword id="KW-0479">Metal-binding</keyword>
<keyword id="KW-0546">Nucleotide metabolism</keyword>
<keyword id="KW-1185">Reference proteome</keyword>
<proteinExistence type="evidence at protein level"/>
<evidence type="ECO:0000250" key="1">
    <source>
        <dbReference type="UniProtKB" id="Q6ZVK8"/>
    </source>
</evidence>
<evidence type="ECO:0000255" key="2">
    <source>
        <dbReference type="PROSITE-ProRule" id="PRU00794"/>
    </source>
</evidence>
<evidence type="ECO:0000303" key="3">
    <source>
    </source>
</evidence>
<evidence type="ECO:0000303" key="4">
    <source>
    </source>
</evidence>
<evidence type="ECO:0000305" key="5"/>
<evidence type="ECO:0000312" key="6">
    <source>
        <dbReference type="MGI" id="MGI:2385853"/>
    </source>
</evidence>
<dbReference type="EC" id="3.6.1.58" evidence="1"/>
<dbReference type="EMBL" id="AK089446">
    <property type="protein sequence ID" value="BAC40887.1"/>
    <property type="molecule type" value="mRNA"/>
</dbReference>
<dbReference type="EMBL" id="AK145997">
    <property type="protein sequence ID" value="BAE26818.1"/>
    <property type="molecule type" value="mRNA"/>
</dbReference>
<dbReference type="EMBL" id="AK155086">
    <property type="protein sequence ID" value="BAE33037.1"/>
    <property type="molecule type" value="mRNA"/>
</dbReference>
<dbReference type="EMBL" id="AK157937">
    <property type="protein sequence ID" value="BAE34271.1"/>
    <property type="molecule type" value="mRNA"/>
</dbReference>
<dbReference type="EMBL" id="BC036718">
    <property type="protein sequence ID" value="AAH36718.1"/>
    <property type="molecule type" value="mRNA"/>
</dbReference>
<dbReference type="CCDS" id="CCDS27258.1">
    <molecule id="Q3U2V3-1"/>
</dbReference>
<dbReference type="RefSeq" id="NP_001347404.1">
    <molecule id="Q3U2V3-2"/>
    <property type="nucleotide sequence ID" value="NM_001360475.1"/>
</dbReference>
<dbReference type="RefSeq" id="NP_694776.2">
    <molecule id="Q3U2V3-1"/>
    <property type="nucleotide sequence ID" value="NM_153136.5"/>
</dbReference>
<dbReference type="RefSeq" id="XP_006518856.1">
    <property type="nucleotide sequence ID" value="XM_006518793.2"/>
</dbReference>
<dbReference type="SMR" id="Q3U2V3"/>
<dbReference type="BioGRID" id="229442">
    <property type="interactions" value="2"/>
</dbReference>
<dbReference type="FunCoup" id="Q3U2V3">
    <property type="interactions" value="85"/>
</dbReference>
<dbReference type="STRING" id="10090.ENSMUSP00000086450"/>
<dbReference type="PhosphoSitePlus" id="Q3U2V3"/>
<dbReference type="SwissPalm" id="Q3U2V3"/>
<dbReference type="PaxDb" id="10090-ENSMUSP00000086450"/>
<dbReference type="ProteomicsDB" id="293809">
    <molecule id="Q3U2V3-1"/>
</dbReference>
<dbReference type="ProteomicsDB" id="293810">
    <molecule id="Q3U2V3-2"/>
</dbReference>
<dbReference type="ProteomicsDB" id="293811">
    <molecule id="Q3U2V3-3"/>
</dbReference>
<dbReference type="Pumba" id="Q3U2V3"/>
<dbReference type="Antibodypedia" id="74437">
    <property type="antibodies" value="188 antibodies from 21 providers"/>
</dbReference>
<dbReference type="DNASU" id="213484"/>
<dbReference type="Ensembl" id="ENSMUST00000089049.4">
    <molecule id="Q3U2V3-1"/>
    <property type="protein sequence ID" value="ENSMUSP00000086450.3"/>
    <property type="gene ID" value="ENSMUSG00000045211.6"/>
</dbReference>
<dbReference type="GeneID" id="213484"/>
<dbReference type="KEGG" id="mmu:213484"/>
<dbReference type="UCSC" id="uc007uok.1">
    <molecule id="Q3U2V3-1"/>
    <property type="organism name" value="mouse"/>
</dbReference>
<dbReference type="AGR" id="MGI:2385853"/>
<dbReference type="CTD" id="79873"/>
<dbReference type="MGI" id="MGI:2385853">
    <property type="gene designation" value="Nudt18"/>
</dbReference>
<dbReference type="VEuPathDB" id="HostDB:ENSMUSG00000045211"/>
<dbReference type="eggNOG" id="KOG0648">
    <property type="taxonomic scope" value="Eukaryota"/>
</dbReference>
<dbReference type="GeneTree" id="ENSGT00390000002931"/>
<dbReference type="HOGENOM" id="CLU_061042_2_0_1"/>
<dbReference type="InParanoid" id="Q3U2V3"/>
<dbReference type="OMA" id="FPTCEIN"/>
<dbReference type="OrthoDB" id="10005910at2759"/>
<dbReference type="PhylomeDB" id="Q3U2V3"/>
<dbReference type="TreeFam" id="TF106355"/>
<dbReference type="Reactome" id="R-MMU-2393930">
    <property type="pathway name" value="Phosphate bond hydrolysis by NUDT proteins"/>
</dbReference>
<dbReference type="BioGRID-ORCS" id="213484">
    <property type="hits" value="4 hits in 77 CRISPR screens"/>
</dbReference>
<dbReference type="PRO" id="PR:Q3U2V3"/>
<dbReference type="Proteomes" id="UP000000589">
    <property type="component" value="Chromosome 14"/>
</dbReference>
<dbReference type="RNAct" id="Q3U2V3">
    <property type="molecule type" value="protein"/>
</dbReference>
<dbReference type="Bgee" id="ENSMUSG00000045211">
    <property type="expression patterns" value="Expressed in seminiferous tubule of testis and 216 other cell types or tissues"/>
</dbReference>
<dbReference type="ExpressionAtlas" id="Q3U2V3">
    <property type="expression patterns" value="baseline and differential"/>
</dbReference>
<dbReference type="GO" id="GO:0044717">
    <property type="term" value="F:8-hydroxy-dADP phosphatase activity"/>
    <property type="evidence" value="ECO:0000250"/>
    <property type="project" value="UniProtKB"/>
</dbReference>
<dbReference type="GO" id="GO:0044715">
    <property type="term" value="F:8-oxo-dGDP phosphatase activity"/>
    <property type="evidence" value="ECO:0000250"/>
    <property type="project" value="UniProtKB"/>
</dbReference>
<dbReference type="GO" id="GO:0044716">
    <property type="term" value="F:8-oxo-GDP phosphatase activity"/>
    <property type="evidence" value="ECO:0000250"/>
    <property type="project" value="UniProtKB"/>
</dbReference>
<dbReference type="GO" id="GO:0046872">
    <property type="term" value="F:metal ion binding"/>
    <property type="evidence" value="ECO:0007669"/>
    <property type="project" value="UniProtKB-KW"/>
</dbReference>
<dbReference type="GO" id="GO:0046057">
    <property type="term" value="P:dADP catabolic process"/>
    <property type="evidence" value="ECO:0000250"/>
    <property type="project" value="UniProtKB"/>
</dbReference>
<dbReference type="GO" id="GO:0046067">
    <property type="term" value="P:dGDP catabolic process"/>
    <property type="evidence" value="ECO:0000250"/>
    <property type="project" value="UniProtKB"/>
</dbReference>
<dbReference type="GO" id="GO:0046712">
    <property type="term" value="P:GDP catabolic process"/>
    <property type="evidence" value="ECO:0000250"/>
    <property type="project" value="UniProtKB"/>
</dbReference>
<dbReference type="CDD" id="cd04671">
    <property type="entry name" value="NUDIX_8DGDPP_Nudt18"/>
    <property type="match status" value="1"/>
</dbReference>
<dbReference type="FunFam" id="3.90.79.10:FF:000080">
    <property type="entry name" value="8-oxo-dGDP phosphatase NUDT18"/>
    <property type="match status" value="1"/>
</dbReference>
<dbReference type="Gene3D" id="3.90.79.10">
    <property type="entry name" value="Nucleoside Triphosphate Pyrophosphohydrolase"/>
    <property type="match status" value="1"/>
</dbReference>
<dbReference type="InterPro" id="IPR020476">
    <property type="entry name" value="Nudix_hydrolase"/>
</dbReference>
<dbReference type="InterPro" id="IPR015797">
    <property type="entry name" value="NUDIX_hydrolase-like_dom_sf"/>
</dbReference>
<dbReference type="InterPro" id="IPR020084">
    <property type="entry name" value="NUDIX_hydrolase_CS"/>
</dbReference>
<dbReference type="InterPro" id="IPR000086">
    <property type="entry name" value="NUDIX_hydrolase_dom"/>
</dbReference>
<dbReference type="InterPro" id="IPR042970">
    <property type="entry name" value="NUDT18_NUDIX"/>
</dbReference>
<dbReference type="PANTHER" id="PTHR22769:SF56">
    <property type="entry name" value="8-OXO-DGDP PHOSPHATASE NUDT18"/>
    <property type="match status" value="1"/>
</dbReference>
<dbReference type="PANTHER" id="PTHR22769">
    <property type="entry name" value="MUTT/NUDIX HYDROLASE"/>
    <property type="match status" value="1"/>
</dbReference>
<dbReference type="Pfam" id="PF00293">
    <property type="entry name" value="NUDIX"/>
    <property type="match status" value="1"/>
</dbReference>
<dbReference type="PRINTS" id="PR00502">
    <property type="entry name" value="NUDIXFAMILY"/>
</dbReference>
<dbReference type="SUPFAM" id="SSF55811">
    <property type="entry name" value="Nudix"/>
    <property type="match status" value="1"/>
</dbReference>
<dbReference type="PROSITE" id="PS51462">
    <property type="entry name" value="NUDIX"/>
    <property type="match status" value="1"/>
</dbReference>
<dbReference type="PROSITE" id="PS00893">
    <property type="entry name" value="NUDIX_BOX"/>
    <property type="match status" value="1"/>
</dbReference>
<protein>
    <recommendedName>
        <fullName evidence="1">8-oxo-dGDP phosphatase NUDT18</fullName>
        <ecNumber evidence="1">3.6.1.58</ecNumber>
    </recommendedName>
    <alternativeName>
        <fullName>2-hydroxy-dADP phosphatase</fullName>
    </alternativeName>
    <alternativeName>
        <fullName>7,8-dihydro-8-oxoguanine phosphatase</fullName>
    </alternativeName>
    <alternativeName>
        <fullName>Nucleoside diphosphate-linked moiety X motif 18</fullName>
        <shortName>Nudix motif 18</shortName>
    </alternativeName>
</protein>
<gene>
    <name evidence="6" type="primary">Nudt18</name>
</gene>
<accession>Q3U2V3</accession>
<accession>Q8C223</accession>
<accession>Q8K1Y7</accession>
<reference key="1">
    <citation type="journal article" date="2005" name="Science">
        <title>The transcriptional landscape of the mammalian genome.</title>
        <authorList>
            <person name="Carninci P."/>
            <person name="Kasukawa T."/>
            <person name="Katayama S."/>
            <person name="Gough J."/>
            <person name="Frith M.C."/>
            <person name="Maeda N."/>
            <person name="Oyama R."/>
            <person name="Ravasi T."/>
            <person name="Lenhard B."/>
            <person name="Wells C."/>
            <person name="Kodzius R."/>
            <person name="Shimokawa K."/>
            <person name="Bajic V.B."/>
            <person name="Brenner S.E."/>
            <person name="Batalov S."/>
            <person name="Forrest A.R."/>
            <person name="Zavolan M."/>
            <person name="Davis M.J."/>
            <person name="Wilming L.G."/>
            <person name="Aidinis V."/>
            <person name="Allen J.E."/>
            <person name="Ambesi-Impiombato A."/>
            <person name="Apweiler R."/>
            <person name="Aturaliya R.N."/>
            <person name="Bailey T.L."/>
            <person name="Bansal M."/>
            <person name="Baxter L."/>
            <person name="Beisel K.W."/>
            <person name="Bersano T."/>
            <person name="Bono H."/>
            <person name="Chalk A.M."/>
            <person name="Chiu K.P."/>
            <person name="Choudhary V."/>
            <person name="Christoffels A."/>
            <person name="Clutterbuck D.R."/>
            <person name="Crowe M.L."/>
            <person name="Dalla E."/>
            <person name="Dalrymple B.P."/>
            <person name="de Bono B."/>
            <person name="Della Gatta G."/>
            <person name="di Bernardo D."/>
            <person name="Down T."/>
            <person name="Engstrom P."/>
            <person name="Fagiolini M."/>
            <person name="Faulkner G."/>
            <person name="Fletcher C.F."/>
            <person name="Fukushima T."/>
            <person name="Furuno M."/>
            <person name="Futaki S."/>
            <person name="Gariboldi M."/>
            <person name="Georgii-Hemming P."/>
            <person name="Gingeras T.R."/>
            <person name="Gojobori T."/>
            <person name="Green R.E."/>
            <person name="Gustincich S."/>
            <person name="Harbers M."/>
            <person name="Hayashi Y."/>
            <person name="Hensch T.K."/>
            <person name="Hirokawa N."/>
            <person name="Hill D."/>
            <person name="Huminiecki L."/>
            <person name="Iacono M."/>
            <person name="Ikeo K."/>
            <person name="Iwama A."/>
            <person name="Ishikawa T."/>
            <person name="Jakt M."/>
            <person name="Kanapin A."/>
            <person name="Katoh M."/>
            <person name="Kawasawa Y."/>
            <person name="Kelso J."/>
            <person name="Kitamura H."/>
            <person name="Kitano H."/>
            <person name="Kollias G."/>
            <person name="Krishnan S.P."/>
            <person name="Kruger A."/>
            <person name="Kummerfeld S.K."/>
            <person name="Kurochkin I.V."/>
            <person name="Lareau L.F."/>
            <person name="Lazarevic D."/>
            <person name="Lipovich L."/>
            <person name="Liu J."/>
            <person name="Liuni S."/>
            <person name="McWilliam S."/>
            <person name="Madan Babu M."/>
            <person name="Madera M."/>
            <person name="Marchionni L."/>
            <person name="Matsuda H."/>
            <person name="Matsuzawa S."/>
            <person name="Miki H."/>
            <person name="Mignone F."/>
            <person name="Miyake S."/>
            <person name="Morris K."/>
            <person name="Mottagui-Tabar S."/>
            <person name="Mulder N."/>
            <person name="Nakano N."/>
            <person name="Nakauchi H."/>
            <person name="Ng P."/>
            <person name="Nilsson R."/>
            <person name="Nishiguchi S."/>
            <person name="Nishikawa S."/>
            <person name="Nori F."/>
            <person name="Ohara O."/>
            <person name="Okazaki Y."/>
            <person name="Orlando V."/>
            <person name="Pang K.C."/>
            <person name="Pavan W.J."/>
            <person name="Pavesi G."/>
            <person name="Pesole G."/>
            <person name="Petrovsky N."/>
            <person name="Piazza S."/>
            <person name="Reed J."/>
            <person name="Reid J.F."/>
            <person name="Ring B.Z."/>
            <person name="Ringwald M."/>
            <person name="Rost B."/>
            <person name="Ruan Y."/>
            <person name="Salzberg S.L."/>
            <person name="Sandelin A."/>
            <person name="Schneider C."/>
            <person name="Schoenbach C."/>
            <person name="Sekiguchi K."/>
            <person name="Semple C.A."/>
            <person name="Seno S."/>
            <person name="Sessa L."/>
            <person name="Sheng Y."/>
            <person name="Shibata Y."/>
            <person name="Shimada H."/>
            <person name="Shimada K."/>
            <person name="Silva D."/>
            <person name="Sinclair B."/>
            <person name="Sperling S."/>
            <person name="Stupka E."/>
            <person name="Sugiura K."/>
            <person name="Sultana R."/>
            <person name="Takenaka Y."/>
            <person name="Taki K."/>
            <person name="Tammoja K."/>
            <person name="Tan S.L."/>
            <person name="Tang S."/>
            <person name="Taylor M.S."/>
            <person name="Tegner J."/>
            <person name="Teichmann S.A."/>
            <person name="Ueda H.R."/>
            <person name="van Nimwegen E."/>
            <person name="Verardo R."/>
            <person name="Wei C.L."/>
            <person name="Yagi K."/>
            <person name="Yamanishi H."/>
            <person name="Zabarovsky E."/>
            <person name="Zhu S."/>
            <person name="Zimmer A."/>
            <person name="Hide W."/>
            <person name="Bult C."/>
            <person name="Grimmond S.M."/>
            <person name="Teasdale R.D."/>
            <person name="Liu E.T."/>
            <person name="Brusic V."/>
            <person name="Quackenbush J."/>
            <person name="Wahlestedt C."/>
            <person name="Mattick J.S."/>
            <person name="Hume D.A."/>
            <person name="Kai C."/>
            <person name="Sasaki D."/>
            <person name="Tomaru Y."/>
            <person name="Fukuda S."/>
            <person name="Kanamori-Katayama M."/>
            <person name="Suzuki M."/>
            <person name="Aoki J."/>
            <person name="Arakawa T."/>
            <person name="Iida J."/>
            <person name="Imamura K."/>
            <person name="Itoh M."/>
            <person name="Kato T."/>
            <person name="Kawaji H."/>
            <person name="Kawagashira N."/>
            <person name="Kawashima T."/>
            <person name="Kojima M."/>
            <person name="Kondo S."/>
            <person name="Konno H."/>
            <person name="Nakano K."/>
            <person name="Ninomiya N."/>
            <person name="Nishio T."/>
            <person name="Okada M."/>
            <person name="Plessy C."/>
            <person name="Shibata K."/>
            <person name="Shiraki T."/>
            <person name="Suzuki S."/>
            <person name="Tagami M."/>
            <person name="Waki K."/>
            <person name="Watahiki A."/>
            <person name="Okamura-Oho Y."/>
            <person name="Suzuki H."/>
            <person name="Kawai J."/>
            <person name="Hayashizaki Y."/>
        </authorList>
    </citation>
    <scope>NUCLEOTIDE SEQUENCE [LARGE SCALE MRNA] (ISOFORMS 1 AND 3)</scope>
    <source>
        <strain>C57BL/6J</strain>
        <strain>NOD</strain>
        <tissue>Inner ear</tissue>
        <tissue>Placenta</tissue>
    </source>
</reference>
<reference key="2">
    <citation type="journal article" date="2004" name="Genome Res.">
        <title>The status, quality, and expansion of the NIH full-length cDNA project: the Mammalian Gene Collection (MGC).</title>
        <authorList>
            <consortium name="The MGC Project Team"/>
        </authorList>
    </citation>
    <scope>NUCLEOTIDE SEQUENCE [LARGE SCALE MRNA] (ISOFORM 2)</scope>
    <source>
        <strain>FVB/N</strain>
        <tissue>Mammary tumor</tissue>
    </source>
</reference>
<reference key="3">
    <citation type="journal article" date="2010" name="Cell">
        <title>A tissue-specific atlas of mouse protein phosphorylation and expression.</title>
        <authorList>
            <person name="Huttlin E.L."/>
            <person name="Jedrychowski M.P."/>
            <person name="Elias J.E."/>
            <person name="Goswami T."/>
            <person name="Rad R."/>
            <person name="Beausoleil S.A."/>
            <person name="Villen J."/>
            <person name="Haas W."/>
            <person name="Sowa M.E."/>
            <person name="Gygi S.P."/>
        </authorList>
    </citation>
    <scope>IDENTIFICATION BY MASS SPECTROMETRY [LARGE SCALE ANALYSIS]</scope>
    <source>
        <tissue>Testis</tissue>
    </source>
</reference>
<sequence>MATEGLAGALATVLGGKGLLVQSCDSEPAGKPLFPVRLRKNVCYVVLAVFLNEQDEVLMIQEAKRECRGTWYLPAGRMEPGETIVEAMQREVKEEAGLLCEPVTLLSVEERGASWIRFVFLARPTGGVLKTSKDADSESLQAGWYPRVSLPTPLRAHDVLHLVELGAKFCQQAMHPLILPQELPCSVVCQRLVTTFTTVQSVWVLVGTVGTPHLPITACGFTPMEQRGGIKVAILRLLQECLTLHSLAVETKGLLGLQHLGRDHVDGVCLNVLVTVAFRNPGIQDEPPKIRGENYFWWKVLEEDLQKLLLYRLQESSVIPLSR</sequence>
<comment type="function">
    <text evidence="1">Mediates the hydrolysis of oxidized nucleoside diphosphate derivatives. Hydrolyzes 8-oxo-7,8-dihydroguanine (8-oxo-Gua)-containing deoxyribo- and ribonucleoside diphosphates to the monophosphates. Hydrolyzes 8-oxo-dGDP and 8-oxo-GDP with the same efficiencies. Also hydrolyzes 8-OH-dADP and 2-OH-dADP. Exhibited no or minimal hydrolysis activity against 8-oxo-dGTP, 8-oxo-GTP, dGTP, GTP, dGDP and GDP. Probably removes oxidized guanine nucleotides from both the DNA and RNA precursor pools.</text>
</comment>
<comment type="catalytic activity">
    <reaction evidence="1">
        <text>8-oxo-dGDP + H2O = 8-oxo-dGMP + phosphate + H(+)</text>
        <dbReference type="Rhea" id="RHEA:32063"/>
        <dbReference type="ChEBI" id="CHEBI:15377"/>
        <dbReference type="ChEBI" id="CHEBI:15378"/>
        <dbReference type="ChEBI" id="CHEBI:43474"/>
        <dbReference type="ChEBI" id="CHEBI:63224"/>
        <dbReference type="ChEBI" id="CHEBI:63715"/>
        <dbReference type="EC" id="3.6.1.58"/>
    </reaction>
    <physiologicalReaction direction="left-to-right" evidence="1">
        <dbReference type="Rhea" id="RHEA:32064"/>
    </physiologicalReaction>
</comment>
<comment type="catalytic activity">
    <reaction evidence="1">
        <text>8-oxo-dADP + H2O = 8-oxo-dAMP + phosphate + H(+)</text>
        <dbReference type="Rhea" id="RHEA:35219"/>
        <dbReference type="ChEBI" id="CHEBI:15377"/>
        <dbReference type="ChEBI" id="CHEBI:15378"/>
        <dbReference type="ChEBI" id="CHEBI:43474"/>
        <dbReference type="ChEBI" id="CHEBI:71361"/>
        <dbReference type="ChEBI" id="CHEBI:71362"/>
    </reaction>
    <physiologicalReaction direction="left-to-right" evidence="1">
        <dbReference type="Rhea" id="RHEA:35220"/>
    </physiologicalReaction>
</comment>
<comment type="catalytic activity">
    <reaction evidence="1">
        <text>2-oxo-dADP + H2O = 2-oxo-dAMP + phosphate + H(+)</text>
        <dbReference type="Rhea" id="RHEA:35223"/>
        <dbReference type="ChEBI" id="CHEBI:15377"/>
        <dbReference type="ChEBI" id="CHEBI:15378"/>
        <dbReference type="ChEBI" id="CHEBI:43474"/>
        <dbReference type="ChEBI" id="CHEBI:63212"/>
        <dbReference type="ChEBI" id="CHEBI:71363"/>
    </reaction>
    <physiologicalReaction direction="left-to-right" evidence="1">
        <dbReference type="Rhea" id="RHEA:35224"/>
    </physiologicalReaction>
</comment>
<comment type="catalytic activity">
    <reaction evidence="1">
        <text>8-oxo-GDP + H2O = 8-oxo-GMP + phosphate + H(+)</text>
        <dbReference type="Rhea" id="RHEA:62356"/>
        <dbReference type="ChEBI" id="CHEBI:15377"/>
        <dbReference type="ChEBI" id="CHEBI:15378"/>
        <dbReference type="ChEBI" id="CHEBI:43474"/>
        <dbReference type="ChEBI" id="CHEBI:143554"/>
        <dbReference type="ChEBI" id="CHEBI:145694"/>
        <dbReference type="EC" id="3.6.1.58"/>
    </reaction>
    <physiologicalReaction direction="left-to-right" evidence="1">
        <dbReference type="Rhea" id="RHEA:62357"/>
    </physiologicalReaction>
</comment>
<comment type="cofactor">
    <cofactor evidence="1">
        <name>Mn(2+)</name>
        <dbReference type="ChEBI" id="CHEBI:29035"/>
    </cofactor>
    <cofactor evidence="1">
        <name>Mg(2+)</name>
        <dbReference type="ChEBI" id="CHEBI:18420"/>
    </cofactor>
</comment>
<comment type="alternative products">
    <event type="alternative splicing"/>
    <isoform>
        <id>Q3U2V3-1</id>
        <name>1</name>
        <sequence type="displayed"/>
    </isoform>
    <isoform>
        <id>Q3U2V3-2</id>
        <name>2</name>
        <sequence type="described" ref="VSP_032279"/>
    </isoform>
    <isoform>
        <id>Q3U2V3-3</id>
        <name>3</name>
        <sequence type="described" ref="VSP_032278"/>
    </isoform>
</comment>
<comment type="similarity">
    <text evidence="5">Belongs to the Nudix hydrolase family.</text>
</comment>